<dbReference type="EMBL" id="X72624">
    <property type="protein sequence ID" value="CAA51199.1"/>
    <property type="molecule type" value="mRNA"/>
</dbReference>
<dbReference type="EMBL" id="BC061842">
    <property type="protein sequence ID" value="AAH61842.1"/>
    <property type="molecule type" value="mRNA"/>
</dbReference>
<dbReference type="EMBL" id="X70685">
    <property type="protein sequence ID" value="CAA50020.1"/>
    <property type="molecule type" value="mRNA"/>
</dbReference>
<dbReference type="PIR" id="S47348">
    <property type="entry name" value="S47348"/>
</dbReference>
<dbReference type="RefSeq" id="NP_036710.1">
    <property type="nucleotide sequence ID" value="NM_012578.2"/>
</dbReference>
<dbReference type="SMR" id="P43278"/>
<dbReference type="BioGRID" id="246602">
    <property type="interactions" value="1"/>
</dbReference>
<dbReference type="FunCoup" id="P43278">
    <property type="interactions" value="133"/>
</dbReference>
<dbReference type="GlyGen" id="P43278">
    <property type="glycosylation" value="1 site"/>
</dbReference>
<dbReference type="iPTMnet" id="P43278"/>
<dbReference type="PhosphoSitePlus" id="P43278"/>
<dbReference type="PaxDb" id="10116-ENSRNOP00000053053"/>
<dbReference type="Ensembl" id="ENSRNOT00000112015.1">
    <property type="protein sequence ID" value="ENSRNOP00000093399.1"/>
    <property type="gene ID" value="ENSRNOG00000063732.1"/>
</dbReference>
<dbReference type="GeneID" id="24437"/>
<dbReference type="KEGG" id="rno:24437"/>
<dbReference type="UCSC" id="RGD:2777">
    <property type="organism name" value="rat"/>
</dbReference>
<dbReference type="AGR" id="RGD:2777"/>
<dbReference type="CTD" id="14958"/>
<dbReference type="RGD" id="2777">
    <property type="gene designation" value="H1f0"/>
</dbReference>
<dbReference type="eggNOG" id="KOG4012">
    <property type="taxonomic scope" value="Eukaryota"/>
</dbReference>
<dbReference type="GeneTree" id="ENSGT00810000125570"/>
<dbReference type="InParanoid" id="P43278"/>
<dbReference type="OMA" id="IKNHYKV"/>
<dbReference type="OrthoDB" id="1110759at2759"/>
<dbReference type="PhylomeDB" id="P43278"/>
<dbReference type="TreeFam" id="TF313664"/>
<dbReference type="Reactome" id="R-RNO-140342">
    <property type="pathway name" value="Apoptosis induced DNA fragmentation"/>
</dbReference>
<dbReference type="PRO" id="PR:P43278"/>
<dbReference type="Proteomes" id="UP000002494">
    <property type="component" value="Chromosome 7"/>
</dbReference>
<dbReference type="GO" id="GO:0000785">
    <property type="term" value="C:chromatin"/>
    <property type="evidence" value="ECO:0000266"/>
    <property type="project" value="RGD"/>
</dbReference>
<dbReference type="GO" id="GO:0000791">
    <property type="term" value="C:euchromatin"/>
    <property type="evidence" value="ECO:0000266"/>
    <property type="project" value="RGD"/>
</dbReference>
<dbReference type="GO" id="GO:0000786">
    <property type="term" value="C:nucleosome"/>
    <property type="evidence" value="ECO:0007669"/>
    <property type="project" value="InterPro"/>
</dbReference>
<dbReference type="GO" id="GO:0005634">
    <property type="term" value="C:nucleus"/>
    <property type="evidence" value="ECO:0000266"/>
    <property type="project" value="RGD"/>
</dbReference>
<dbReference type="GO" id="GO:0017053">
    <property type="term" value="C:transcription repressor complex"/>
    <property type="evidence" value="ECO:0000266"/>
    <property type="project" value="RGD"/>
</dbReference>
<dbReference type="GO" id="GO:0031490">
    <property type="term" value="F:chromatin DNA binding"/>
    <property type="evidence" value="ECO:0000266"/>
    <property type="project" value="RGD"/>
</dbReference>
<dbReference type="GO" id="GO:0003677">
    <property type="term" value="F:DNA binding"/>
    <property type="evidence" value="ECO:0000266"/>
    <property type="project" value="RGD"/>
</dbReference>
<dbReference type="GO" id="GO:0003690">
    <property type="term" value="F:double-stranded DNA binding"/>
    <property type="evidence" value="ECO:0000266"/>
    <property type="project" value="RGD"/>
</dbReference>
<dbReference type="GO" id="GO:0003680">
    <property type="term" value="F:minor groove of adenine-thymine-rich DNA binding"/>
    <property type="evidence" value="ECO:0000266"/>
    <property type="project" value="RGD"/>
</dbReference>
<dbReference type="GO" id="GO:0031492">
    <property type="term" value="F:nucleosomal DNA binding"/>
    <property type="evidence" value="ECO:0000318"/>
    <property type="project" value="GO_Central"/>
</dbReference>
<dbReference type="GO" id="GO:0031491">
    <property type="term" value="F:nucleosome binding"/>
    <property type="evidence" value="ECO:0000266"/>
    <property type="project" value="RGD"/>
</dbReference>
<dbReference type="GO" id="GO:0030527">
    <property type="term" value="F:structural constituent of chromatin"/>
    <property type="evidence" value="ECO:0007669"/>
    <property type="project" value="InterPro"/>
</dbReference>
<dbReference type="GO" id="GO:0030261">
    <property type="term" value="P:chromosome condensation"/>
    <property type="evidence" value="ECO:0000318"/>
    <property type="project" value="GO_Central"/>
</dbReference>
<dbReference type="GO" id="GO:0031507">
    <property type="term" value="P:heterochromatin formation"/>
    <property type="evidence" value="ECO:0000266"/>
    <property type="project" value="RGD"/>
</dbReference>
<dbReference type="GO" id="GO:0045910">
    <property type="term" value="P:negative regulation of DNA recombination"/>
    <property type="evidence" value="ECO:0000318"/>
    <property type="project" value="GO_Central"/>
</dbReference>
<dbReference type="GO" id="GO:0006334">
    <property type="term" value="P:nucleosome assembly"/>
    <property type="evidence" value="ECO:0007669"/>
    <property type="project" value="InterPro"/>
</dbReference>
<dbReference type="CDD" id="cd00073">
    <property type="entry name" value="H15"/>
    <property type="match status" value="1"/>
</dbReference>
<dbReference type="FunFam" id="1.10.10.10:FF:000140">
    <property type="entry name" value="Histone H1.0"/>
    <property type="match status" value="1"/>
</dbReference>
<dbReference type="Gene3D" id="1.10.10.10">
    <property type="entry name" value="Winged helix-like DNA-binding domain superfamily/Winged helix DNA-binding domain"/>
    <property type="match status" value="1"/>
</dbReference>
<dbReference type="InterPro" id="IPR005819">
    <property type="entry name" value="H1/H5"/>
</dbReference>
<dbReference type="InterPro" id="IPR005818">
    <property type="entry name" value="Histone_H1/H5_H15"/>
</dbReference>
<dbReference type="InterPro" id="IPR036388">
    <property type="entry name" value="WH-like_DNA-bd_sf"/>
</dbReference>
<dbReference type="InterPro" id="IPR036390">
    <property type="entry name" value="WH_DNA-bd_sf"/>
</dbReference>
<dbReference type="PANTHER" id="PTHR11467">
    <property type="entry name" value="HISTONE H1"/>
    <property type="match status" value="1"/>
</dbReference>
<dbReference type="PANTHER" id="PTHR11467:SF182">
    <property type="entry name" value="HISTONE H1.0"/>
    <property type="match status" value="1"/>
</dbReference>
<dbReference type="Pfam" id="PF00538">
    <property type="entry name" value="Linker_histone"/>
    <property type="match status" value="1"/>
</dbReference>
<dbReference type="PRINTS" id="PR00624">
    <property type="entry name" value="HISTONEH5"/>
</dbReference>
<dbReference type="SMART" id="SM00526">
    <property type="entry name" value="H15"/>
    <property type="match status" value="1"/>
</dbReference>
<dbReference type="SUPFAM" id="SSF46785">
    <property type="entry name" value="Winged helix' DNA-binding domain"/>
    <property type="match status" value="1"/>
</dbReference>
<dbReference type="PROSITE" id="PS51504">
    <property type="entry name" value="H15"/>
    <property type="match status" value="1"/>
</dbReference>
<keyword id="KW-0007">Acetylation</keyword>
<keyword id="KW-0013">ADP-ribosylation</keyword>
<keyword id="KW-0158">Chromosome</keyword>
<keyword id="KW-0164">Citrullination</keyword>
<keyword id="KW-0238">DNA-binding</keyword>
<keyword id="KW-0539">Nucleus</keyword>
<keyword id="KW-1185">Reference proteome</keyword>
<name>H10_RAT</name>
<proteinExistence type="evidence at transcript level"/>
<accession>P43278</accession>
<feature type="chain" id="PRO_0000423210" description="Histone H1.0">
    <location>
        <begin position="1"/>
        <end position="194"/>
    </location>
</feature>
<feature type="initiator methionine" description="Removed; alternate" evidence="1">
    <location>
        <position position="1"/>
    </location>
</feature>
<feature type="chain" id="PRO_0000195923" description="Histone H1.0, N-terminally processed">
    <location>
        <begin position="2"/>
        <end position="194"/>
    </location>
</feature>
<feature type="domain" description="H15" evidence="3">
    <location>
        <begin position="24"/>
        <end position="97"/>
    </location>
</feature>
<feature type="region of interest" description="Disordered" evidence="4">
    <location>
        <begin position="1"/>
        <end position="26"/>
    </location>
</feature>
<feature type="region of interest" description="Disordered" evidence="4">
    <location>
        <begin position="86"/>
        <end position="194"/>
    </location>
</feature>
<feature type="compositionally biased region" description="Basic residues" evidence="4">
    <location>
        <begin position="105"/>
        <end position="194"/>
    </location>
</feature>
<feature type="modified residue" description="N-acetylmethionine" evidence="1">
    <location>
        <position position="1"/>
    </location>
</feature>
<feature type="modified residue" description="N-acetylthreonine; in Histone H1.0, N-terminally processed" evidence="1">
    <location>
        <position position="2"/>
    </location>
</feature>
<feature type="modified residue" description="Citrulline" evidence="2">
    <location>
        <position position="42"/>
    </location>
</feature>
<feature type="modified residue" description="ADP-ribosylserine" evidence="1">
    <location>
        <position position="104"/>
    </location>
</feature>
<comment type="function">
    <text>Histones H1 are necessary for the condensation of nucleosome chains into higher-order structures. The histones H1.0 are found in cells that are in terminal stages of differentiation or that have low rates of cell division.</text>
</comment>
<comment type="subcellular location">
    <subcellularLocation>
        <location>Nucleus</location>
    </subcellularLocation>
    <subcellularLocation>
        <location>Chromosome</location>
    </subcellularLocation>
</comment>
<comment type="PTM">
    <text evidence="1">ADP-ribosylated on Ser-104 in response to DNA damage.</text>
</comment>
<comment type="similarity">
    <text evidence="3">Belongs to the histone H1/H5 family.</text>
</comment>
<evidence type="ECO:0000250" key="1">
    <source>
        <dbReference type="UniProtKB" id="P07305"/>
    </source>
</evidence>
<evidence type="ECO:0000250" key="2">
    <source>
        <dbReference type="UniProtKB" id="P43275"/>
    </source>
</evidence>
<evidence type="ECO:0000255" key="3">
    <source>
        <dbReference type="PROSITE-ProRule" id="PRU00837"/>
    </source>
</evidence>
<evidence type="ECO:0000256" key="4">
    <source>
        <dbReference type="SAM" id="MobiDB-lite"/>
    </source>
</evidence>
<reference key="1">
    <citation type="submission" date="1993-03" db="EMBL/GenBank/DDBJ databases">
        <authorList>
            <person name="Suau P."/>
            <person name="Monsalves C."/>
            <person name="Martinez P."/>
            <person name="Vidal J.M."/>
            <person name="Ponte I."/>
        </authorList>
    </citation>
    <scope>NUCLEOTIDE SEQUENCE [MRNA]</scope>
</reference>
<reference key="2">
    <citation type="journal article" date="2004" name="Genome Res.">
        <title>The status, quality, and expansion of the NIH full-length cDNA project: the Mammalian Gene Collection (MGC).</title>
        <authorList>
            <consortium name="The MGC Project Team"/>
        </authorList>
    </citation>
    <scope>NUCLEOTIDE SEQUENCE [LARGE SCALE MRNA]</scope>
    <source>
        <tissue>Prostate</tissue>
    </source>
</reference>
<reference key="3">
    <citation type="journal article" date="1993" name="Nucleic Acids Res.">
        <title>Cloning and analysis of cDNA for rat histone H1(0).</title>
        <authorList>
            <person name="Castiglia D."/>
            <person name="Gristina R."/>
            <person name="Scaturro M."/>
            <person name="di Liegro I."/>
        </authorList>
    </citation>
    <scope>NUCLEOTIDE SEQUENCE [MRNA] OF 31-194</scope>
    <source>
        <strain>Sprague-Dawley</strain>
    </source>
</reference>
<gene>
    <name type="primary">H1-0</name>
    <name type="synonym">H1f0</name>
</gene>
<organism>
    <name type="scientific">Rattus norvegicus</name>
    <name type="common">Rat</name>
    <dbReference type="NCBI Taxonomy" id="10116"/>
    <lineage>
        <taxon>Eukaryota</taxon>
        <taxon>Metazoa</taxon>
        <taxon>Chordata</taxon>
        <taxon>Craniata</taxon>
        <taxon>Vertebrata</taxon>
        <taxon>Euteleostomi</taxon>
        <taxon>Mammalia</taxon>
        <taxon>Eutheria</taxon>
        <taxon>Euarchontoglires</taxon>
        <taxon>Glires</taxon>
        <taxon>Rodentia</taxon>
        <taxon>Myomorpha</taxon>
        <taxon>Muroidea</taxon>
        <taxon>Muridae</taxon>
        <taxon>Murinae</taxon>
        <taxon>Rattus</taxon>
    </lineage>
</organism>
<protein>
    <recommendedName>
        <fullName>Histone H1.0</fullName>
    </recommendedName>
    <alternativeName>
        <fullName>Histone H1'</fullName>
    </alternativeName>
    <alternativeName>
        <fullName>Histone H1(0)</fullName>
    </alternativeName>
    <component>
        <recommendedName>
            <fullName>Histone H1.0, N-terminally processed</fullName>
        </recommendedName>
    </component>
</protein>
<sequence length="194" mass="20885">MTENSTSTPAAKPKRAKAAKKSTDHPKYSDMIVAAIQAEKNRAGSSRQSIQKYIKSHYKVGENADSQIKLSIKRLVTTGVLKQTKGVGASGSFRLAKGDEPKRSVAFKKTKKEVKKVATPKKAAKPKKAASKAPSKKPKATPVKKAKKKPAATPKKAKKPKIVKVKPVKASKPKKAKPVKPKAKSSAKRASKKK</sequence>